<comment type="function">
    <text evidence="1">Catalyzes the hydrolysis of 4-amino-2-methyl-5-hydroxymethylpyrimidine pyrophosphate (HMP-PP) to 4-amino-2-methyl-5-hydroxymethylpyrimidine phosphate (HMP-P).</text>
</comment>
<comment type="catalytic activity">
    <reaction evidence="1">
        <text>4-amino-2-methyl-5-(diphosphooxymethyl)pyrimidine + H2O = 4-amino-2-methyl-5-(phosphooxymethyl)pyrimidine + phosphate + H(+)</text>
        <dbReference type="Rhea" id="RHEA:27914"/>
        <dbReference type="ChEBI" id="CHEBI:15377"/>
        <dbReference type="ChEBI" id="CHEBI:15378"/>
        <dbReference type="ChEBI" id="CHEBI:43474"/>
        <dbReference type="ChEBI" id="CHEBI:57841"/>
        <dbReference type="ChEBI" id="CHEBI:58354"/>
    </reaction>
</comment>
<comment type="cofactor">
    <cofactor evidence="1">
        <name>Mg(2+)</name>
        <dbReference type="ChEBI" id="CHEBI:18420"/>
    </cofactor>
</comment>
<comment type="similarity">
    <text evidence="1">Belongs to the HAD-like hydrolase superfamily. Cof family.</text>
</comment>
<comment type="sequence caution" evidence="2">
    <conflict type="erroneous initiation">
        <sequence resource="EMBL-CDS" id="ABV13820"/>
    </conflict>
    <text>Extended N-terminus.</text>
</comment>
<reference key="1">
    <citation type="submission" date="2007-08" db="EMBL/GenBank/DDBJ databases">
        <authorList>
            <consortium name="The Citrobacter koseri Genome Sequencing Project"/>
            <person name="McClelland M."/>
            <person name="Sanderson E.K."/>
            <person name="Porwollik S."/>
            <person name="Spieth J."/>
            <person name="Clifton W.S."/>
            <person name="Latreille P."/>
            <person name="Courtney L."/>
            <person name="Wang C."/>
            <person name="Pepin K."/>
            <person name="Bhonagiri V."/>
            <person name="Nash W."/>
            <person name="Johnson M."/>
            <person name="Thiruvilangam P."/>
            <person name="Wilson R."/>
        </authorList>
    </citation>
    <scope>NUCLEOTIDE SEQUENCE [LARGE SCALE GENOMIC DNA]</scope>
    <source>
        <strain>ATCC BAA-895 / CDC 4225-83 / SGSC4696</strain>
    </source>
</reference>
<keyword id="KW-0378">Hydrolase</keyword>
<keyword id="KW-0460">Magnesium</keyword>
<keyword id="KW-0479">Metal-binding</keyword>
<keyword id="KW-1185">Reference proteome</keyword>
<feature type="chain" id="PRO_0000342974" description="HMP-PP phosphatase">
    <location>
        <begin position="1"/>
        <end position="272"/>
    </location>
</feature>
<feature type="active site" description="Nucleophile" evidence="1">
    <location>
        <position position="8"/>
    </location>
</feature>
<feature type="binding site" evidence="1">
    <location>
        <position position="8"/>
    </location>
    <ligand>
        <name>Mg(2+)</name>
        <dbReference type="ChEBI" id="CHEBI:18420"/>
    </ligand>
</feature>
<feature type="binding site" evidence="1">
    <location>
        <position position="10"/>
    </location>
    <ligand>
        <name>Mg(2+)</name>
        <dbReference type="ChEBI" id="CHEBI:18420"/>
    </ligand>
</feature>
<feature type="binding site" evidence="1">
    <location>
        <position position="212"/>
    </location>
    <ligand>
        <name>Mg(2+)</name>
        <dbReference type="ChEBI" id="CHEBI:18420"/>
    </ligand>
</feature>
<protein>
    <recommendedName>
        <fullName evidence="1">HMP-PP phosphatase</fullName>
        <ecNumber evidence="1">3.6.1.-</ecNumber>
    </recommendedName>
</protein>
<evidence type="ECO:0000255" key="1">
    <source>
        <dbReference type="HAMAP-Rule" id="MF_01847"/>
    </source>
</evidence>
<evidence type="ECO:0000305" key="2"/>
<gene>
    <name evidence="1" type="primary">cof</name>
    <name type="ordered locus">CKO_02714</name>
</gene>
<name>COF_CITK8</name>
<sequence>MARLAAFDMDGTLLMPNHHLGHETLATLARLRERDITLTFATGRHVLEMRHILGAISMDAFLITGNGTRIHSQEGDMLHRQDLDPAIADRVLHQAWDTRASMHVFNDNGWFTGSAIPALLQAHVYSGFHYQIVDVKRIPAHQVTKICFCGDHDDLIRLRIQLNEALGERANLCFSAVDCLEVLPLGCNKGSALAVLSDHLGLSLTECMAFGDAMNDREMLESVGRGLIMGNAMPQLIAELPHLSVIGHCRNQAVSHFLTHWLDNPHLPYSPE</sequence>
<proteinExistence type="inferred from homology"/>
<accession>A8AK07</accession>
<organism>
    <name type="scientific">Citrobacter koseri (strain ATCC BAA-895 / CDC 4225-83 / SGSC4696)</name>
    <dbReference type="NCBI Taxonomy" id="290338"/>
    <lineage>
        <taxon>Bacteria</taxon>
        <taxon>Pseudomonadati</taxon>
        <taxon>Pseudomonadota</taxon>
        <taxon>Gammaproteobacteria</taxon>
        <taxon>Enterobacterales</taxon>
        <taxon>Enterobacteriaceae</taxon>
        <taxon>Citrobacter</taxon>
    </lineage>
</organism>
<dbReference type="EC" id="3.6.1.-" evidence="1"/>
<dbReference type="EMBL" id="CP000822">
    <property type="protein sequence ID" value="ABV13820.1"/>
    <property type="status" value="ALT_INIT"/>
    <property type="molecule type" value="Genomic_DNA"/>
</dbReference>
<dbReference type="RefSeq" id="WP_024130593.1">
    <property type="nucleotide sequence ID" value="NC_009792.1"/>
</dbReference>
<dbReference type="SMR" id="A8AK07"/>
<dbReference type="STRING" id="290338.CKO_02714"/>
<dbReference type="GeneID" id="45136569"/>
<dbReference type="KEGG" id="cko:CKO_02714"/>
<dbReference type="HOGENOM" id="CLU_044146_5_2_6"/>
<dbReference type="OrthoDB" id="5498330at2"/>
<dbReference type="Proteomes" id="UP000008148">
    <property type="component" value="Chromosome"/>
</dbReference>
<dbReference type="GO" id="GO:0002145">
    <property type="term" value="F:4-amino-5-hydroxymethyl-2-methylpyrimidine diphosphatase activity"/>
    <property type="evidence" value="ECO:0007669"/>
    <property type="project" value="RHEA"/>
</dbReference>
<dbReference type="GO" id="GO:0000287">
    <property type="term" value="F:magnesium ion binding"/>
    <property type="evidence" value="ECO:0000250"/>
    <property type="project" value="UniProtKB"/>
</dbReference>
<dbReference type="GO" id="GO:0016791">
    <property type="term" value="F:phosphatase activity"/>
    <property type="evidence" value="ECO:0000250"/>
    <property type="project" value="UniProtKB"/>
</dbReference>
<dbReference type="CDD" id="cd07516">
    <property type="entry name" value="HAD_Pase"/>
    <property type="match status" value="1"/>
</dbReference>
<dbReference type="FunFam" id="3.30.1240.10:FF:000002">
    <property type="entry name" value="HMP-PP phosphatase"/>
    <property type="match status" value="1"/>
</dbReference>
<dbReference type="Gene3D" id="3.30.1240.10">
    <property type="match status" value="1"/>
</dbReference>
<dbReference type="Gene3D" id="3.40.50.1000">
    <property type="entry name" value="HAD superfamily/HAD-like"/>
    <property type="match status" value="1"/>
</dbReference>
<dbReference type="HAMAP" id="MF_01847">
    <property type="entry name" value="HMP_PP_phosphat"/>
    <property type="match status" value="1"/>
</dbReference>
<dbReference type="InterPro" id="IPR000150">
    <property type="entry name" value="Cof"/>
</dbReference>
<dbReference type="InterPro" id="IPR036412">
    <property type="entry name" value="HAD-like_sf"/>
</dbReference>
<dbReference type="InterPro" id="IPR006379">
    <property type="entry name" value="HAD-SF_hydro_IIB"/>
</dbReference>
<dbReference type="InterPro" id="IPR023214">
    <property type="entry name" value="HAD_sf"/>
</dbReference>
<dbReference type="InterPro" id="IPR023938">
    <property type="entry name" value="HMP-PP_phosphatase"/>
</dbReference>
<dbReference type="NCBIfam" id="TIGR00099">
    <property type="entry name" value="Cof-subfamily"/>
    <property type="match status" value="1"/>
</dbReference>
<dbReference type="NCBIfam" id="TIGR01484">
    <property type="entry name" value="HAD-SF-IIB"/>
    <property type="match status" value="1"/>
</dbReference>
<dbReference type="NCBIfam" id="NF011705">
    <property type="entry name" value="PRK15126.1"/>
    <property type="match status" value="1"/>
</dbReference>
<dbReference type="PANTHER" id="PTHR47267">
    <property type="match status" value="1"/>
</dbReference>
<dbReference type="PANTHER" id="PTHR47267:SF2">
    <property type="entry name" value="HMP-PP PHOSPHATASE"/>
    <property type="match status" value="1"/>
</dbReference>
<dbReference type="Pfam" id="PF08282">
    <property type="entry name" value="Hydrolase_3"/>
    <property type="match status" value="1"/>
</dbReference>
<dbReference type="SFLD" id="SFLDG01140">
    <property type="entry name" value="C2.B:_Phosphomannomutase_and_P"/>
    <property type="match status" value="1"/>
</dbReference>
<dbReference type="SFLD" id="SFLDS00003">
    <property type="entry name" value="Haloacid_Dehalogenase"/>
    <property type="match status" value="1"/>
</dbReference>
<dbReference type="SUPFAM" id="SSF56784">
    <property type="entry name" value="HAD-like"/>
    <property type="match status" value="1"/>
</dbReference>
<dbReference type="PROSITE" id="PS01228">
    <property type="entry name" value="COF_1"/>
    <property type="match status" value="1"/>
</dbReference>
<dbReference type="PROSITE" id="PS01229">
    <property type="entry name" value="COF_2"/>
    <property type="match status" value="1"/>
</dbReference>